<accession>Q81KI3</accession>
<accession>Q6HRY5</accession>
<accession>Q6KL90</accession>
<evidence type="ECO:0000250" key="1"/>
<evidence type="ECO:0000305" key="2"/>
<comment type="function">
    <text evidence="1">May be involved in the biosynthesis of molybdopterin.</text>
</comment>
<comment type="pathway">
    <text>Cofactor biosynthesis; molybdopterin biosynthesis.</text>
</comment>
<comment type="similarity">
    <text evidence="2">Belongs to the MoaB/Mog family.</text>
</comment>
<proteinExistence type="inferred from homology"/>
<sequence length="169" mass="18558">MSVTEHKKQAPKEVRCKIVTISDTRTEETDKSGQLLHELLKEAGHTVTSYEIVKDDKESIQQAVLAGYHREDVDVVLTNGGTGITKRDVTIEAVSALLHKEIVGFGELFRMISYLEDIGSSAMLSRAIGGTIGRKVVFSMPGSSGAVRLAMNKLILPELGHITFELHRQ</sequence>
<reference key="1">
    <citation type="journal article" date="2003" name="Nature">
        <title>The genome sequence of Bacillus anthracis Ames and comparison to closely related bacteria.</title>
        <authorList>
            <person name="Read T.D."/>
            <person name="Peterson S.N."/>
            <person name="Tourasse N.J."/>
            <person name="Baillie L.W."/>
            <person name="Paulsen I.T."/>
            <person name="Nelson K.E."/>
            <person name="Tettelin H."/>
            <person name="Fouts D.E."/>
            <person name="Eisen J.A."/>
            <person name="Gill S.R."/>
            <person name="Holtzapple E.K."/>
            <person name="Okstad O.A."/>
            <person name="Helgason E."/>
            <person name="Rilstone J."/>
            <person name="Wu M."/>
            <person name="Kolonay J.F."/>
            <person name="Beanan M.J."/>
            <person name="Dodson R.J."/>
            <person name="Brinkac L.M."/>
            <person name="Gwinn M.L."/>
            <person name="DeBoy R.T."/>
            <person name="Madpu R."/>
            <person name="Daugherty S.C."/>
            <person name="Durkin A.S."/>
            <person name="Haft D.H."/>
            <person name="Nelson W.C."/>
            <person name="Peterson J.D."/>
            <person name="Pop M."/>
            <person name="Khouri H.M."/>
            <person name="Radune D."/>
            <person name="Benton J.L."/>
            <person name="Mahamoud Y."/>
            <person name="Jiang L."/>
            <person name="Hance I.R."/>
            <person name="Weidman J.F."/>
            <person name="Berry K.J."/>
            <person name="Plaut R.D."/>
            <person name="Wolf A.M."/>
            <person name="Watkins K.L."/>
            <person name="Nierman W.C."/>
            <person name="Hazen A."/>
            <person name="Cline R.T."/>
            <person name="Redmond C."/>
            <person name="Thwaite J.E."/>
            <person name="White O."/>
            <person name="Salzberg S.L."/>
            <person name="Thomason B."/>
            <person name="Friedlander A.M."/>
            <person name="Koehler T.M."/>
            <person name="Hanna P.C."/>
            <person name="Kolstoe A.-B."/>
            <person name="Fraser C.M."/>
        </authorList>
    </citation>
    <scope>NUCLEOTIDE SEQUENCE [LARGE SCALE GENOMIC DNA]</scope>
    <source>
        <strain>Ames / isolate Porton</strain>
    </source>
</reference>
<reference key="2">
    <citation type="journal article" date="2009" name="J. Bacteriol.">
        <title>The complete genome sequence of Bacillus anthracis Ames 'Ancestor'.</title>
        <authorList>
            <person name="Ravel J."/>
            <person name="Jiang L."/>
            <person name="Stanley S.T."/>
            <person name="Wilson M.R."/>
            <person name="Decker R.S."/>
            <person name="Read T.D."/>
            <person name="Worsham P."/>
            <person name="Keim P.S."/>
            <person name="Salzberg S.L."/>
            <person name="Fraser-Liggett C.M."/>
            <person name="Rasko D.A."/>
        </authorList>
    </citation>
    <scope>NUCLEOTIDE SEQUENCE [LARGE SCALE GENOMIC DNA]</scope>
    <source>
        <strain>Ames ancestor</strain>
    </source>
</reference>
<reference key="3">
    <citation type="submission" date="2004-01" db="EMBL/GenBank/DDBJ databases">
        <title>Complete genome sequence of Bacillus anthracis Sterne.</title>
        <authorList>
            <person name="Brettin T.S."/>
            <person name="Bruce D."/>
            <person name="Challacombe J.F."/>
            <person name="Gilna P."/>
            <person name="Han C."/>
            <person name="Hill K."/>
            <person name="Hitchcock P."/>
            <person name="Jackson P."/>
            <person name="Keim P."/>
            <person name="Longmire J."/>
            <person name="Lucas S."/>
            <person name="Okinaka R."/>
            <person name="Richardson P."/>
            <person name="Rubin E."/>
            <person name="Tice H."/>
        </authorList>
    </citation>
    <scope>NUCLEOTIDE SEQUENCE [LARGE SCALE GENOMIC DNA]</scope>
    <source>
        <strain>Sterne</strain>
    </source>
</reference>
<gene>
    <name type="primary">moaB</name>
    <name type="ordered locus">BA_5014</name>
    <name type="ordered locus">GBAA_5014</name>
    <name type="ordered locus">BAS4659</name>
</gene>
<organism>
    <name type="scientific">Bacillus anthracis</name>
    <dbReference type="NCBI Taxonomy" id="1392"/>
    <lineage>
        <taxon>Bacteria</taxon>
        <taxon>Bacillati</taxon>
        <taxon>Bacillota</taxon>
        <taxon>Bacilli</taxon>
        <taxon>Bacillales</taxon>
        <taxon>Bacillaceae</taxon>
        <taxon>Bacillus</taxon>
        <taxon>Bacillus cereus group</taxon>
    </lineage>
</organism>
<protein>
    <recommendedName>
        <fullName>Molybdenum cofactor biosynthesis protein B</fullName>
    </recommendedName>
</protein>
<dbReference type="EMBL" id="AE016879">
    <property type="protein sequence ID" value="AAP28694.1"/>
    <property type="molecule type" value="Genomic_DNA"/>
</dbReference>
<dbReference type="EMBL" id="AE017334">
    <property type="protein sequence ID" value="AAT34141.1"/>
    <property type="molecule type" value="Genomic_DNA"/>
</dbReference>
<dbReference type="EMBL" id="AE017225">
    <property type="protein sequence ID" value="AAT56953.1"/>
    <property type="molecule type" value="Genomic_DNA"/>
</dbReference>
<dbReference type="RefSeq" id="NP_847208.1">
    <property type="nucleotide sequence ID" value="NC_003997.3"/>
</dbReference>
<dbReference type="RefSeq" id="WP_000117134.1">
    <property type="nucleotide sequence ID" value="NZ_WXXJ01000026.1"/>
</dbReference>
<dbReference type="RefSeq" id="YP_030903.1">
    <property type="nucleotide sequence ID" value="NC_005945.1"/>
</dbReference>
<dbReference type="SMR" id="Q81KI3"/>
<dbReference type="STRING" id="261594.GBAA_5014"/>
<dbReference type="DNASU" id="1084270"/>
<dbReference type="KEGG" id="ban:BA_5014"/>
<dbReference type="KEGG" id="banh:HYU01_24430"/>
<dbReference type="KEGG" id="bar:GBAA_5014"/>
<dbReference type="KEGG" id="bat:BAS4659"/>
<dbReference type="PATRIC" id="fig|198094.11.peg.4976"/>
<dbReference type="eggNOG" id="COG0521">
    <property type="taxonomic scope" value="Bacteria"/>
</dbReference>
<dbReference type="HOGENOM" id="CLU_077358_2_3_9"/>
<dbReference type="OMA" id="TGWDGIL"/>
<dbReference type="OrthoDB" id="9784492at2"/>
<dbReference type="UniPathway" id="UPA00344"/>
<dbReference type="Proteomes" id="UP000000427">
    <property type="component" value="Chromosome"/>
</dbReference>
<dbReference type="Proteomes" id="UP000000594">
    <property type="component" value="Chromosome"/>
</dbReference>
<dbReference type="GO" id="GO:0005829">
    <property type="term" value="C:cytosol"/>
    <property type="evidence" value="ECO:0007669"/>
    <property type="project" value="TreeGrafter"/>
</dbReference>
<dbReference type="GO" id="GO:0006777">
    <property type="term" value="P:Mo-molybdopterin cofactor biosynthetic process"/>
    <property type="evidence" value="ECO:0007669"/>
    <property type="project" value="UniProtKB-KW"/>
</dbReference>
<dbReference type="CDD" id="cd00886">
    <property type="entry name" value="MogA_MoaB"/>
    <property type="match status" value="1"/>
</dbReference>
<dbReference type="FunFam" id="3.40.980.10:FF:000006">
    <property type="entry name" value="Molybdenum cofactor biosynthesis protein B"/>
    <property type="match status" value="1"/>
</dbReference>
<dbReference type="Gene3D" id="3.40.980.10">
    <property type="entry name" value="MoaB/Mog-like domain"/>
    <property type="match status" value="1"/>
</dbReference>
<dbReference type="InterPro" id="IPR012245">
    <property type="entry name" value="MoaB"/>
</dbReference>
<dbReference type="InterPro" id="IPR036425">
    <property type="entry name" value="MoaB/Mog-like_dom_sf"/>
</dbReference>
<dbReference type="InterPro" id="IPR001453">
    <property type="entry name" value="MoaB/Mog_dom"/>
</dbReference>
<dbReference type="InterPro" id="IPR008284">
    <property type="entry name" value="MoCF_biosynth_CS"/>
</dbReference>
<dbReference type="NCBIfam" id="TIGR00177">
    <property type="entry name" value="molyb_syn"/>
    <property type="match status" value="1"/>
</dbReference>
<dbReference type="PANTHER" id="PTHR43232">
    <property type="entry name" value="MOLYBDENUM COFACTOR BIOSYNTHESIS PROTEIN B"/>
    <property type="match status" value="1"/>
</dbReference>
<dbReference type="PANTHER" id="PTHR43232:SF2">
    <property type="entry name" value="MOLYBDENUM COFACTOR BIOSYNTHESIS PROTEIN B"/>
    <property type="match status" value="1"/>
</dbReference>
<dbReference type="Pfam" id="PF00994">
    <property type="entry name" value="MoCF_biosynth"/>
    <property type="match status" value="1"/>
</dbReference>
<dbReference type="PIRSF" id="PIRSF006443">
    <property type="entry name" value="MoaB"/>
    <property type="match status" value="1"/>
</dbReference>
<dbReference type="SMART" id="SM00852">
    <property type="entry name" value="MoCF_biosynth"/>
    <property type="match status" value="1"/>
</dbReference>
<dbReference type="SUPFAM" id="SSF53218">
    <property type="entry name" value="Molybdenum cofactor biosynthesis proteins"/>
    <property type="match status" value="1"/>
</dbReference>
<dbReference type="PROSITE" id="PS01078">
    <property type="entry name" value="MOCF_BIOSYNTHESIS_1"/>
    <property type="match status" value="1"/>
</dbReference>
<keyword id="KW-0501">Molybdenum cofactor biosynthesis</keyword>
<keyword id="KW-1185">Reference proteome</keyword>
<name>MOAB_BACAN</name>
<feature type="chain" id="PRO_0000170966" description="Molybdenum cofactor biosynthesis protein B">
    <location>
        <begin position="1"/>
        <end position="169"/>
    </location>
</feature>